<dbReference type="EC" id="3.4.16.-"/>
<dbReference type="EMBL" id="CR857214">
    <property type="protein sequence ID" value="CAH89513.1"/>
    <property type="molecule type" value="mRNA"/>
</dbReference>
<dbReference type="RefSeq" id="NP_001124656.1">
    <property type="nucleotide sequence ID" value="NM_001131184.1"/>
</dbReference>
<dbReference type="SMR" id="Q5RFE4"/>
<dbReference type="FunCoup" id="Q5RFE4">
    <property type="interactions" value="1238"/>
</dbReference>
<dbReference type="STRING" id="9601.ENSPPYP00000019824"/>
<dbReference type="ESTHER" id="ponab-cpvl">
    <property type="family name" value="Carboxypeptidase_S10"/>
</dbReference>
<dbReference type="MEROPS" id="S10.003"/>
<dbReference type="GlyCosmos" id="Q5RFE4">
    <property type="glycosylation" value="4 sites, No reported glycans"/>
</dbReference>
<dbReference type="GeneID" id="100171497"/>
<dbReference type="KEGG" id="pon:100171497"/>
<dbReference type="CTD" id="54504"/>
<dbReference type="eggNOG" id="KOG1282">
    <property type="taxonomic scope" value="Eukaryota"/>
</dbReference>
<dbReference type="InParanoid" id="Q5RFE4"/>
<dbReference type="OrthoDB" id="443318at2759"/>
<dbReference type="Proteomes" id="UP000001595">
    <property type="component" value="Unplaced"/>
</dbReference>
<dbReference type="GO" id="GO:0004185">
    <property type="term" value="F:serine-type carboxypeptidase activity"/>
    <property type="evidence" value="ECO:0007669"/>
    <property type="project" value="InterPro"/>
</dbReference>
<dbReference type="GO" id="GO:0006508">
    <property type="term" value="P:proteolysis"/>
    <property type="evidence" value="ECO:0007669"/>
    <property type="project" value="UniProtKB-KW"/>
</dbReference>
<dbReference type="FunFam" id="3.40.50.1820:FF:000096">
    <property type="entry name" value="Carboxypeptidase vitellogenic-like"/>
    <property type="match status" value="1"/>
</dbReference>
<dbReference type="Gene3D" id="3.40.50.1820">
    <property type="entry name" value="alpha/beta hydrolase"/>
    <property type="match status" value="1"/>
</dbReference>
<dbReference type="InterPro" id="IPR029058">
    <property type="entry name" value="AB_hydrolase_fold"/>
</dbReference>
<dbReference type="InterPro" id="IPR001563">
    <property type="entry name" value="Peptidase_S10"/>
</dbReference>
<dbReference type="InterPro" id="IPR018202">
    <property type="entry name" value="Ser_caboxypep_ser_AS"/>
</dbReference>
<dbReference type="PANTHER" id="PTHR11802:SF472">
    <property type="entry name" value="SERINE CARBOXYPEPTIDASE CPVL-RELATED"/>
    <property type="match status" value="1"/>
</dbReference>
<dbReference type="PANTHER" id="PTHR11802">
    <property type="entry name" value="SERINE PROTEASE FAMILY S10 SERINE CARBOXYPEPTIDASE"/>
    <property type="match status" value="1"/>
</dbReference>
<dbReference type="Pfam" id="PF00450">
    <property type="entry name" value="Peptidase_S10"/>
    <property type="match status" value="1"/>
</dbReference>
<dbReference type="PRINTS" id="PR00724">
    <property type="entry name" value="CRBOXYPTASEC"/>
</dbReference>
<dbReference type="SUPFAM" id="SSF53474">
    <property type="entry name" value="alpha/beta-Hydrolases"/>
    <property type="match status" value="1"/>
</dbReference>
<dbReference type="PROSITE" id="PS00131">
    <property type="entry name" value="CARBOXYPEPT_SER_SER"/>
    <property type="match status" value="1"/>
</dbReference>
<feature type="signal peptide" evidence="2">
    <location>
        <begin position="1"/>
        <end position="22"/>
    </location>
</feature>
<feature type="propeptide" id="PRO_0000004282" evidence="2">
    <location>
        <begin position="23"/>
        <end status="unknown"/>
    </location>
</feature>
<feature type="chain" id="PRO_0000004283" description="Probable serine carboxypeptidase CPVL">
    <location>
        <begin status="unknown"/>
        <end position="476"/>
    </location>
</feature>
<feature type="active site" evidence="3">
    <location>
        <position position="204"/>
    </location>
</feature>
<feature type="active site" evidence="3">
    <location>
        <position position="388"/>
    </location>
</feature>
<feature type="active site" evidence="3">
    <location>
        <position position="448"/>
    </location>
</feature>
<feature type="glycosylation site" description="N-linked (GlcNAc...) asparagine" evidence="2">
    <location>
        <position position="81"/>
    </location>
</feature>
<feature type="glycosylation site" description="N-linked (GlcNAc...) asparagine" evidence="2">
    <location>
        <position position="132"/>
    </location>
</feature>
<feature type="glycosylation site" description="N-linked (GlcNAc...) asparagine" evidence="2">
    <location>
        <position position="307"/>
    </location>
</feature>
<feature type="glycosylation site" description="N-linked (GlcNAc...) asparagine" evidence="2">
    <location>
        <position position="346"/>
    </location>
</feature>
<gene>
    <name type="primary">CPVL</name>
</gene>
<name>CPVL_PONAB</name>
<keyword id="KW-0121">Carboxypeptidase</keyword>
<keyword id="KW-0325">Glycoprotein</keyword>
<keyword id="KW-0378">Hydrolase</keyword>
<keyword id="KW-0645">Protease</keyword>
<keyword id="KW-1185">Reference proteome</keyword>
<keyword id="KW-0732">Signal</keyword>
<keyword id="KW-0865">Zymogen</keyword>
<comment type="function">
    <text evidence="1">May be involved in the digestion of phagocytosed particles in the lysosome, participation in an inflammatory protease cascade, and trimming of peptides for antigen presentation.</text>
</comment>
<comment type="similarity">
    <text evidence="4">Belongs to the peptidase S10 family.</text>
</comment>
<protein>
    <recommendedName>
        <fullName>Probable serine carboxypeptidase CPVL</fullName>
        <ecNumber>3.4.16.-</ecNumber>
    </recommendedName>
</protein>
<sequence length="476" mass="54254">MVGTMWKVIVSLVLLMPGSCDGLFRSLYRSVSMPPKGDSGQPLFLTPYIEAGKIQKGRELSLVSPFLGLNMRSYAGFLTVNKTYNSNLFFWFFPAQIQPEDAPVVLWLQGGPGFSSMFGLFVEHGPYVVTSNMTLRDRDFPWTTTLSMLYIDNPVGTGFSFTDDTHGYAVNEDDVAQDLYSALIQFFQIFPEYKNNDFYVTGESYAGKYVPAIAHLIHSLNPVREVKINLKGIAIGDGYSDPESIIGGYAEFLYQIGLLDEKQKKYFQKQCHECIEHIRKQNWFQAFEILDKLLDGDLTSDPSYFQNVTGCSNYCNFLRCTEPEDQLYYAKFLSLPEVRQAIHVGNRTFNDGTTVEKYLREDTVQSVKPWLTEIMNNYKVLIYNGQLDIIVAAALTEHSLMGMDWKGSQEYKKAEKKVWKIFKSDSEVAGYVRQVGDFHQVIIRGGGHILPYIQPLRAFDMINRFIYGKGWDPYVG</sequence>
<accession>Q5RFE4</accession>
<proteinExistence type="evidence at transcript level"/>
<organism>
    <name type="scientific">Pongo abelii</name>
    <name type="common">Sumatran orangutan</name>
    <name type="synonym">Pongo pygmaeus abelii</name>
    <dbReference type="NCBI Taxonomy" id="9601"/>
    <lineage>
        <taxon>Eukaryota</taxon>
        <taxon>Metazoa</taxon>
        <taxon>Chordata</taxon>
        <taxon>Craniata</taxon>
        <taxon>Vertebrata</taxon>
        <taxon>Euteleostomi</taxon>
        <taxon>Mammalia</taxon>
        <taxon>Eutheria</taxon>
        <taxon>Euarchontoglires</taxon>
        <taxon>Primates</taxon>
        <taxon>Haplorrhini</taxon>
        <taxon>Catarrhini</taxon>
        <taxon>Hominidae</taxon>
        <taxon>Pongo</taxon>
    </lineage>
</organism>
<evidence type="ECO:0000250" key="1"/>
<evidence type="ECO:0000255" key="2"/>
<evidence type="ECO:0000255" key="3">
    <source>
        <dbReference type="PROSITE-ProRule" id="PRU10074"/>
    </source>
</evidence>
<evidence type="ECO:0000305" key="4"/>
<reference key="1">
    <citation type="submission" date="2004-11" db="EMBL/GenBank/DDBJ databases">
        <authorList>
            <consortium name="The German cDNA consortium"/>
        </authorList>
    </citation>
    <scope>NUCLEOTIDE SEQUENCE [LARGE SCALE MRNA]</scope>
    <source>
        <tissue>Kidney</tissue>
    </source>
</reference>